<reference key="1">
    <citation type="journal article" date="2009" name="BMC Genomics">
        <title>Metabolic analysis of the soil microbe Dechloromonas aromatica str. RCB: indications of a surprisingly complex life-style and cryptic anaerobic pathways for aromatic degradation.</title>
        <authorList>
            <person name="Salinero K.K."/>
            <person name="Keller K."/>
            <person name="Feil W.S."/>
            <person name="Feil H."/>
            <person name="Trong S."/>
            <person name="Di Bartolo G."/>
            <person name="Lapidus A."/>
        </authorList>
    </citation>
    <scope>NUCLEOTIDE SEQUENCE [LARGE SCALE GENOMIC DNA]</scope>
    <source>
        <strain>RCB</strain>
    </source>
</reference>
<proteinExistence type="inferred from homology"/>
<gene>
    <name evidence="1" type="primary">rpmJ</name>
    <name type="ordered locus">Daro_0341</name>
</gene>
<evidence type="ECO:0000255" key="1">
    <source>
        <dbReference type="HAMAP-Rule" id="MF_00251"/>
    </source>
</evidence>
<evidence type="ECO:0000305" key="2"/>
<name>RL36_DECAR</name>
<organism>
    <name type="scientific">Dechloromonas aromatica (strain RCB)</name>
    <dbReference type="NCBI Taxonomy" id="159087"/>
    <lineage>
        <taxon>Bacteria</taxon>
        <taxon>Pseudomonadati</taxon>
        <taxon>Pseudomonadota</taxon>
        <taxon>Betaproteobacteria</taxon>
        <taxon>Rhodocyclales</taxon>
        <taxon>Azonexaceae</taxon>
        <taxon>Dechloromonas</taxon>
    </lineage>
</organism>
<protein>
    <recommendedName>
        <fullName evidence="1">Large ribosomal subunit protein bL36</fullName>
    </recommendedName>
    <alternativeName>
        <fullName evidence="2">50S ribosomal protein L36</fullName>
    </alternativeName>
</protein>
<dbReference type="EMBL" id="CP000089">
    <property type="protein sequence ID" value="AAZ45100.1"/>
    <property type="molecule type" value="Genomic_DNA"/>
</dbReference>
<dbReference type="SMR" id="Q47J81"/>
<dbReference type="STRING" id="159087.Daro_0341"/>
<dbReference type="KEGG" id="dar:Daro_0341"/>
<dbReference type="eggNOG" id="COG0257">
    <property type="taxonomic scope" value="Bacteria"/>
</dbReference>
<dbReference type="HOGENOM" id="CLU_135723_6_2_4"/>
<dbReference type="OrthoDB" id="9802520at2"/>
<dbReference type="GO" id="GO:0005737">
    <property type="term" value="C:cytoplasm"/>
    <property type="evidence" value="ECO:0007669"/>
    <property type="project" value="UniProtKB-ARBA"/>
</dbReference>
<dbReference type="GO" id="GO:1990904">
    <property type="term" value="C:ribonucleoprotein complex"/>
    <property type="evidence" value="ECO:0007669"/>
    <property type="project" value="UniProtKB-KW"/>
</dbReference>
<dbReference type="GO" id="GO:0005840">
    <property type="term" value="C:ribosome"/>
    <property type="evidence" value="ECO:0007669"/>
    <property type="project" value="UniProtKB-KW"/>
</dbReference>
<dbReference type="GO" id="GO:0003735">
    <property type="term" value="F:structural constituent of ribosome"/>
    <property type="evidence" value="ECO:0007669"/>
    <property type="project" value="InterPro"/>
</dbReference>
<dbReference type="GO" id="GO:0006412">
    <property type="term" value="P:translation"/>
    <property type="evidence" value="ECO:0007669"/>
    <property type="project" value="UniProtKB-UniRule"/>
</dbReference>
<dbReference type="HAMAP" id="MF_00251">
    <property type="entry name" value="Ribosomal_bL36"/>
    <property type="match status" value="1"/>
</dbReference>
<dbReference type="InterPro" id="IPR000473">
    <property type="entry name" value="Ribosomal_bL36"/>
</dbReference>
<dbReference type="InterPro" id="IPR035977">
    <property type="entry name" value="Ribosomal_bL36_sp"/>
</dbReference>
<dbReference type="NCBIfam" id="TIGR01022">
    <property type="entry name" value="rpmJ_bact"/>
    <property type="match status" value="1"/>
</dbReference>
<dbReference type="PANTHER" id="PTHR42888">
    <property type="entry name" value="50S RIBOSOMAL PROTEIN L36, CHLOROPLASTIC"/>
    <property type="match status" value="1"/>
</dbReference>
<dbReference type="PANTHER" id="PTHR42888:SF1">
    <property type="entry name" value="LARGE RIBOSOMAL SUBUNIT PROTEIN BL36C"/>
    <property type="match status" value="1"/>
</dbReference>
<dbReference type="Pfam" id="PF00444">
    <property type="entry name" value="Ribosomal_L36"/>
    <property type="match status" value="1"/>
</dbReference>
<dbReference type="SUPFAM" id="SSF57840">
    <property type="entry name" value="Ribosomal protein L36"/>
    <property type="match status" value="1"/>
</dbReference>
<dbReference type="PROSITE" id="PS00828">
    <property type="entry name" value="RIBOSOMAL_L36"/>
    <property type="match status" value="1"/>
</dbReference>
<feature type="chain" id="PRO_0000302192" description="Large ribosomal subunit protein bL36">
    <location>
        <begin position="1"/>
        <end position="37"/>
    </location>
</feature>
<sequence>MKVQPSVKRICRNCKVIRRKGVVRIICKDPRHKQRQG</sequence>
<keyword id="KW-0687">Ribonucleoprotein</keyword>
<keyword id="KW-0689">Ribosomal protein</keyword>
<comment type="similarity">
    <text evidence="1">Belongs to the bacterial ribosomal protein bL36 family.</text>
</comment>
<accession>Q47J81</accession>